<protein>
    <recommendedName>
        <fullName evidence="14">UTP--glucose-1-phosphate uridylyltransferase</fullName>
        <ecNumber evidence="5 6 8">2.7.7.9</ecNumber>
    </recommendedName>
    <alternativeName>
        <fullName>UDP-glucose pyrophosphorylase</fullName>
        <shortName>UDPGP</shortName>
        <shortName>UGPase</shortName>
    </alternativeName>
</protein>
<dbReference type="EC" id="2.7.7.9" evidence="5 6 8"/>
<dbReference type="EMBL" id="U27460">
    <property type="protein sequence ID" value="AAB05640.1"/>
    <property type="molecule type" value="mRNA"/>
</dbReference>
<dbReference type="EMBL" id="BC000173">
    <property type="protein sequence ID" value="AAH00173.2"/>
    <property type="molecule type" value="mRNA"/>
</dbReference>
<dbReference type="EMBL" id="BC002954">
    <property type="protein sequence ID" value="AAH02954.1"/>
    <property type="molecule type" value="mRNA"/>
</dbReference>
<dbReference type="EMBL" id="BC047004">
    <property type="protein sequence ID" value="AAH47004.1"/>
    <property type="molecule type" value="mRNA"/>
</dbReference>
<dbReference type="CCDS" id="CCDS1875.1">
    <molecule id="Q16851-1"/>
</dbReference>
<dbReference type="CCDS" id="CCDS42690.1">
    <molecule id="Q16851-2"/>
</dbReference>
<dbReference type="PIR" id="S35692">
    <property type="entry name" value="S35692"/>
</dbReference>
<dbReference type="RefSeq" id="NP_001001521.1">
    <molecule id="Q16851-2"/>
    <property type="nucleotide sequence ID" value="NM_001001521.2"/>
</dbReference>
<dbReference type="RefSeq" id="NP_001364453.1">
    <molecule id="Q16851-2"/>
    <property type="nucleotide sequence ID" value="NM_001377524.1"/>
</dbReference>
<dbReference type="RefSeq" id="NP_001364454.1">
    <molecule id="Q16851-2"/>
    <property type="nucleotide sequence ID" value="NM_001377525.1"/>
</dbReference>
<dbReference type="RefSeq" id="NP_006750.3">
    <molecule id="Q16851-1"/>
    <property type="nucleotide sequence ID" value="NM_006759.3"/>
</dbReference>
<dbReference type="RefSeq" id="XP_005264594.1">
    <property type="nucleotide sequence ID" value="XM_005264537.2"/>
</dbReference>
<dbReference type="RefSeq" id="XP_005264595.1">
    <property type="nucleotide sequence ID" value="XM_005264538.1"/>
</dbReference>
<dbReference type="RefSeq" id="XP_024308888.1">
    <molecule id="Q16851-2"/>
    <property type="nucleotide sequence ID" value="XM_024453120.2"/>
</dbReference>
<dbReference type="PDB" id="3R2W">
    <property type="method" value="X-ray"/>
    <property type="resolution" value="3.60 A"/>
    <property type="chains" value="A/B/C/D=1-508"/>
</dbReference>
<dbReference type="PDB" id="3R3I">
    <property type="method" value="X-ray"/>
    <property type="resolution" value="3.57 A"/>
    <property type="chains" value="A/B/C/D=1-508"/>
</dbReference>
<dbReference type="PDB" id="4R7P">
    <property type="method" value="X-ray"/>
    <property type="resolution" value="3.35 A"/>
    <property type="chains" value="A/B/C/D=2-508"/>
</dbReference>
<dbReference type="PDBsum" id="3R2W"/>
<dbReference type="PDBsum" id="3R3I"/>
<dbReference type="PDBsum" id="4R7P"/>
<dbReference type="SMR" id="Q16851"/>
<dbReference type="BioGRID" id="113207">
    <property type="interactions" value="104"/>
</dbReference>
<dbReference type="CORUM" id="Q16851"/>
<dbReference type="FunCoup" id="Q16851">
    <property type="interactions" value="2703"/>
</dbReference>
<dbReference type="IntAct" id="Q16851">
    <property type="interactions" value="28"/>
</dbReference>
<dbReference type="MINT" id="Q16851"/>
<dbReference type="STRING" id="9606.ENSP00000338703"/>
<dbReference type="GlyGen" id="Q16851">
    <property type="glycosylation" value="2 sites, 1 N-linked glycan (1 site), 1 O-linked glycan (1 site)"/>
</dbReference>
<dbReference type="iPTMnet" id="Q16851"/>
<dbReference type="MetOSite" id="Q16851"/>
<dbReference type="PhosphoSitePlus" id="Q16851"/>
<dbReference type="SwissPalm" id="Q16851"/>
<dbReference type="BioMuta" id="UGP2"/>
<dbReference type="DMDM" id="59803098"/>
<dbReference type="REPRODUCTION-2DPAGE" id="IPI00395676"/>
<dbReference type="CPTAC" id="CPTAC-291"/>
<dbReference type="CPTAC" id="CPTAC-292"/>
<dbReference type="jPOST" id="Q16851"/>
<dbReference type="MassIVE" id="Q16851"/>
<dbReference type="PaxDb" id="9606-ENSP00000338703"/>
<dbReference type="PeptideAtlas" id="Q16851"/>
<dbReference type="ProteomicsDB" id="61103">
    <molecule id="Q16851-1"/>
</dbReference>
<dbReference type="ProteomicsDB" id="61104">
    <molecule id="Q16851-2"/>
</dbReference>
<dbReference type="Pumba" id="Q16851"/>
<dbReference type="Antibodypedia" id="30782">
    <property type="antibodies" value="212 antibodies from 24 providers"/>
</dbReference>
<dbReference type="DNASU" id="7360"/>
<dbReference type="Ensembl" id="ENST00000337130.10">
    <molecule id="Q16851-1"/>
    <property type="protein sequence ID" value="ENSP00000338703.5"/>
    <property type="gene ID" value="ENSG00000169764.16"/>
</dbReference>
<dbReference type="Ensembl" id="ENST00000394417.7">
    <molecule id="Q16851-2"/>
    <property type="protein sequence ID" value="ENSP00000377939.2"/>
    <property type="gene ID" value="ENSG00000169764.16"/>
</dbReference>
<dbReference type="Ensembl" id="ENST00000467648.6">
    <molecule id="Q16851-2"/>
    <property type="protein sequence ID" value="ENSP00000420793.2"/>
    <property type="gene ID" value="ENSG00000169764.16"/>
</dbReference>
<dbReference type="GeneID" id="7360"/>
<dbReference type="KEGG" id="hsa:7360"/>
<dbReference type="MANE-Select" id="ENST00000337130.10">
    <property type="protein sequence ID" value="ENSP00000338703.5"/>
    <property type="RefSeq nucleotide sequence ID" value="NM_006759.4"/>
    <property type="RefSeq protein sequence ID" value="NP_006750.3"/>
</dbReference>
<dbReference type="UCSC" id="uc002scl.4">
    <molecule id="Q16851-1"/>
    <property type="organism name" value="human"/>
</dbReference>
<dbReference type="AGR" id="HGNC:12527"/>
<dbReference type="CTD" id="7360"/>
<dbReference type="DisGeNET" id="7360"/>
<dbReference type="GeneCards" id="UGP2"/>
<dbReference type="HGNC" id="HGNC:12527">
    <property type="gene designation" value="UGP2"/>
</dbReference>
<dbReference type="HPA" id="ENSG00000169764">
    <property type="expression patterns" value="Tissue enhanced (liver, tongue)"/>
</dbReference>
<dbReference type="MalaCards" id="UGP2"/>
<dbReference type="MIM" id="191760">
    <property type="type" value="gene"/>
</dbReference>
<dbReference type="MIM" id="618744">
    <property type="type" value="phenotype"/>
</dbReference>
<dbReference type="neXtProt" id="NX_Q16851"/>
<dbReference type="OpenTargets" id="ENSG00000169764"/>
<dbReference type="PharmGKB" id="PA37172"/>
<dbReference type="VEuPathDB" id="HostDB:ENSG00000169764"/>
<dbReference type="eggNOG" id="KOG2638">
    <property type="taxonomic scope" value="Eukaryota"/>
</dbReference>
<dbReference type="GeneTree" id="ENSGT00940000153464"/>
<dbReference type="HOGENOM" id="CLU_023632_3_0_1"/>
<dbReference type="InParanoid" id="Q16851"/>
<dbReference type="OMA" id="KEYCFLS"/>
<dbReference type="OrthoDB" id="932129at2759"/>
<dbReference type="PAN-GO" id="Q16851">
    <property type="GO annotations" value="4 GO annotations based on evolutionary models"/>
</dbReference>
<dbReference type="PhylomeDB" id="Q16851"/>
<dbReference type="TreeFam" id="TF300567"/>
<dbReference type="BioCyc" id="MetaCyc:HS10006-MONOMER"/>
<dbReference type="BRENDA" id="2.7.7.9">
    <property type="organism ID" value="2681"/>
</dbReference>
<dbReference type="PathwayCommons" id="Q16851"/>
<dbReference type="Reactome" id="R-HSA-173599">
    <property type="pathway name" value="Formation of the active cofactor, UDP-glucuronate"/>
</dbReference>
<dbReference type="Reactome" id="R-HSA-3322077">
    <property type="pathway name" value="Glycogen synthesis"/>
</dbReference>
<dbReference type="SABIO-RK" id="Q16851"/>
<dbReference type="SignaLink" id="Q16851"/>
<dbReference type="SIGNOR" id="Q16851"/>
<dbReference type="UniPathway" id="UPA00164"/>
<dbReference type="BioGRID-ORCS" id="7360">
    <property type="hits" value="136 hits in 1170 CRISPR screens"/>
</dbReference>
<dbReference type="CD-CODE" id="FB4E32DD">
    <property type="entry name" value="Presynaptic clusters and postsynaptic densities"/>
</dbReference>
<dbReference type="ChiTaRS" id="UGP2">
    <property type="organism name" value="human"/>
</dbReference>
<dbReference type="EvolutionaryTrace" id="Q16851"/>
<dbReference type="GenomeRNAi" id="7360"/>
<dbReference type="Pharos" id="Q16851">
    <property type="development level" value="Tbio"/>
</dbReference>
<dbReference type="PRO" id="PR:Q16851"/>
<dbReference type="Proteomes" id="UP000005640">
    <property type="component" value="Chromosome 2"/>
</dbReference>
<dbReference type="RNAct" id="Q16851">
    <property type="molecule type" value="protein"/>
</dbReference>
<dbReference type="Bgee" id="ENSG00000169764">
    <property type="expression patterns" value="Expressed in skeletal muscle tissue of biceps brachii and 210 other cell types or tissues"/>
</dbReference>
<dbReference type="ExpressionAtlas" id="Q16851">
    <property type="expression patterns" value="baseline and differential"/>
</dbReference>
<dbReference type="GO" id="GO:0005737">
    <property type="term" value="C:cytoplasm"/>
    <property type="evidence" value="ECO:0000318"/>
    <property type="project" value="GO_Central"/>
</dbReference>
<dbReference type="GO" id="GO:0005829">
    <property type="term" value="C:cytosol"/>
    <property type="evidence" value="ECO:0000304"/>
    <property type="project" value="Reactome"/>
</dbReference>
<dbReference type="GO" id="GO:0070062">
    <property type="term" value="C:extracellular exosome"/>
    <property type="evidence" value="ECO:0007005"/>
    <property type="project" value="UniProtKB"/>
</dbReference>
<dbReference type="GO" id="GO:0005634">
    <property type="term" value="C:nucleus"/>
    <property type="evidence" value="ECO:0007005"/>
    <property type="project" value="UniProtKB"/>
</dbReference>
<dbReference type="GO" id="GO:0005536">
    <property type="term" value="F:D-glucose binding"/>
    <property type="evidence" value="ECO:0007669"/>
    <property type="project" value="Ensembl"/>
</dbReference>
<dbReference type="GO" id="GO:0042802">
    <property type="term" value="F:identical protein binding"/>
    <property type="evidence" value="ECO:0000353"/>
    <property type="project" value="IntAct"/>
</dbReference>
<dbReference type="GO" id="GO:0046872">
    <property type="term" value="F:metal ion binding"/>
    <property type="evidence" value="ECO:0007669"/>
    <property type="project" value="UniProtKB-KW"/>
</dbReference>
<dbReference type="GO" id="GO:0032557">
    <property type="term" value="F:pyrimidine ribonucleotide binding"/>
    <property type="evidence" value="ECO:0007669"/>
    <property type="project" value="Ensembl"/>
</dbReference>
<dbReference type="GO" id="GO:0003983">
    <property type="term" value="F:UTP:glucose-1-phosphate uridylyltransferase activity"/>
    <property type="evidence" value="ECO:0000314"/>
    <property type="project" value="UniProtKB"/>
</dbReference>
<dbReference type="GO" id="GO:0007420">
    <property type="term" value="P:brain development"/>
    <property type="evidence" value="ECO:0000315"/>
    <property type="project" value="UniProtKB"/>
</dbReference>
<dbReference type="GO" id="GO:0019255">
    <property type="term" value="P:glucose 1-phosphate metabolic process"/>
    <property type="evidence" value="ECO:0007669"/>
    <property type="project" value="Ensembl"/>
</dbReference>
<dbReference type="GO" id="GO:0005978">
    <property type="term" value="P:glycogen biosynthetic process"/>
    <property type="evidence" value="ECO:0000315"/>
    <property type="project" value="UniProtKB"/>
</dbReference>
<dbReference type="GO" id="GO:0005977">
    <property type="term" value="P:glycogen metabolic process"/>
    <property type="evidence" value="ECO:0000318"/>
    <property type="project" value="GO_Central"/>
</dbReference>
<dbReference type="GO" id="GO:0006011">
    <property type="term" value="P:UDP-alpha-D-glucose metabolic process"/>
    <property type="evidence" value="ECO:0000314"/>
    <property type="project" value="UniProtKB"/>
</dbReference>
<dbReference type="GO" id="GO:0006065">
    <property type="term" value="P:UDP-glucuronate biosynthetic process"/>
    <property type="evidence" value="ECO:0007669"/>
    <property type="project" value="Ensembl"/>
</dbReference>
<dbReference type="CDD" id="cd00897">
    <property type="entry name" value="UGPase_euk"/>
    <property type="match status" value="1"/>
</dbReference>
<dbReference type="FunFam" id="2.160.10.10:FF:000001">
    <property type="entry name" value="UTP--glucose-1-phosphate uridylyltransferase"/>
    <property type="match status" value="1"/>
</dbReference>
<dbReference type="FunFam" id="3.90.550.10:FF:000002">
    <property type="entry name" value="UTP--glucose-1-phosphate uridylyltransferase"/>
    <property type="match status" value="1"/>
</dbReference>
<dbReference type="Gene3D" id="2.160.10.10">
    <property type="entry name" value="Hexapeptide repeat proteins"/>
    <property type="match status" value="1"/>
</dbReference>
<dbReference type="Gene3D" id="3.90.550.10">
    <property type="entry name" value="Spore Coat Polysaccharide Biosynthesis Protein SpsA, Chain A"/>
    <property type="match status" value="1"/>
</dbReference>
<dbReference type="InterPro" id="IPR029044">
    <property type="entry name" value="Nucleotide-diphossugar_trans"/>
</dbReference>
<dbReference type="InterPro" id="IPR002618">
    <property type="entry name" value="UDPGP_fam"/>
</dbReference>
<dbReference type="InterPro" id="IPR016267">
    <property type="entry name" value="UDPGP_trans"/>
</dbReference>
<dbReference type="PANTHER" id="PTHR43511">
    <property type="match status" value="1"/>
</dbReference>
<dbReference type="Pfam" id="PF01704">
    <property type="entry name" value="UDPGP"/>
    <property type="match status" value="1"/>
</dbReference>
<dbReference type="PIRSF" id="PIRSF000806">
    <property type="entry name" value="UDPGP"/>
    <property type="match status" value="1"/>
</dbReference>
<dbReference type="SUPFAM" id="SSF53448">
    <property type="entry name" value="Nucleotide-diphospho-sugar transferases"/>
    <property type="match status" value="1"/>
</dbReference>
<reference key="1">
    <citation type="journal article" date="1993" name="FEBS Lett.">
        <title>Cloning of a human liver UDP-glucose pyrophosphorylase cDNA by complementation of the bacterial galU mutation.</title>
        <authorList>
            <person name="Peng H.-L."/>
            <person name="Chang H.-Y."/>
        </authorList>
    </citation>
    <scope>NUCLEOTIDE SEQUENCE [MRNA] (ISOFORM 1)</scope>
    <scope>FUNCTION</scope>
    <scope>CATALYTIC ACTIVITY</scope>
    <scope>SUBCELLULAR LOCATION</scope>
    <scope>TISSUE SPECIFICITY</scope>
    <scope>VARIANT ILE-268</scope>
    <scope>CAUTION</scope>
    <source>
        <tissue>Liver</tissue>
    </source>
</reference>
<reference key="2">
    <citation type="journal article" date="1996" name="Eur. J. Biochem.">
        <title>Sequence differences between human muscle and liver cDNAs for UDPglucose pyrophosphorylase and kinetic properties of the recombinant enzymes expressed in Escherichia coli.</title>
        <authorList>
            <person name="Duggleby R.G."/>
            <person name="Chao Y.C."/>
            <person name="Huang J.G."/>
            <person name="Peng H.-L."/>
            <person name="Chang H.-Y."/>
        </authorList>
    </citation>
    <scope>NUCLEOTIDE SEQUENCE [MRNA] (ISOFORM 2)</scope>
    <scope>FUNCTION</scope>
    <scope>CATALYTIC ACTIVITY</scope>
    <scope>BIOPHYSICOCHEMICAL PROPERTIES (ISOFORMS 1 AND 2)</scope>
    <scope>TISSUE SPECIFICITY</scope>
    <scope>VARIANT ILE-268</scope>
    <scope>CAUTION</scope>
    <source>
        <tissue>Skeletal muscle</tissue>
    </source>
</reference>
<reference key="3">
    <citation type="journal article" date="2004" name="Genome Res.">
        <title>The status, quality, and expansion of the NIH full-length cDNA project: the Mammalian Gene Collection (MGC).</title>
        <authorList>
            <consortium name="The MGC Project Team"/>
        </authorList>
    </citation>
    <scope>NUCLEOTIDE SEQUENCE [LARGE SCALE MRNA] (ISOFORMS 1 AND 2)</scope>
    <source>
        <tissue>Cervix</tissue>
        <tissue>Lymph</tissue>
        <tissue>Skin</tissue>
    </source>
</reference>
<reference key="4">
    <citation type="journal article" date="1996" name="Eur. J. Biochem.">
        <title>The importance of conserved residues in human liver UDPglucose pyrophosphorylase.</title>
        <authorList>
            <person name="Chang H.-Y."/>
            <person name="Peng H.-L."/>
            <person name="Chao Y.C."/>
            <person name="Duggleby R.G."/>
        </authorList>
    </citation>
    <scope>MUTAGENESIS</scope>
</reference>
<reference key="5">
    <citation type="journal article" date="2009" name="Science">
        <title>Lysine acetylation targets protein complexes and co-regulates major cellular functions.</title>
        <authorList>
            <person name="Choudhary C."/>
            <person name="Kumar C."/>
            <person name="Gnad F."/>
            <person name="Nielsen M.L."/>
            <person name="Rehman M."/>
            <person name="Walther T.C."/>
            <person name="Olsen J.V."/>
            <person name="Mann M."/>
        </authorList>
    </citation>
    <scope>ACETYLATION [LARGE SCALE ANALYSIS] AT LYS-438</scope>
    <scope>IDENTIFICATION BY MASS SPECTROMETRY [LARGE SCALE ANALYSIS]</scope>
</reference>
<reference key="6">
    <citation type="journal article" date="2010" name="Sci. Signal.">
        <title>Quantitative phosphoproteomics reveals widespread full phosphorylation site occupancy during mitosis.</title>
        <authorList>
            <person name="Olsen J.V."/>
            <person name="Vermeulen M."/>
            <person name="Santamaria A."/>
            <person name="Kumar C."/>
            <person name="Miller M.L."/>
            <person name="Jensen L.J."/>
            <person name="Gnad F."/>
            <person name="Cox J."/>
            <person name="Jensen T.S."/>
            <person name="Nigg E.A."/>
            <person name="Brunak S."/>
            <person name="Mann M."/>
        </authorList>
    </citation>
    <scope>ACETYLATION [LARGE SCALE ANALYSIS] AT SER-2 (ISOFORM 2)</scope>
    <scope>PHOSPHORYLATION [LARGE SCALE ANALYSIS] AT SER-2 (ISOFORM 2)</scope>
    <scope>CLEAVAGE OF INITIATOR METHIONINE [LARGE SCALE ANALYSIS] (ISOFORM 2)</scope>
    <scope>IDENTIFICATION BY MASS SPECTROMETRY [LARGE SCALE ANALYSIS]</scope>
    <source>
        <tissue>Cervix carcinoma</tissue>
    </source>
</reference>
<reference key="7">
    <citation type="journal article" date="2011" name="BMC Syst. Biol.">
        <title>Initial characterization of the human central proteome.</title>
        <authorList>
            <person name="Burkard T.R."/>
            <person name="Planyavsky M."/>
            <person name="Kaupe I."/>
            <person name="Breitwieser F.P."/>
            <person name="Buerckstuemmer T."/>
            <person name="Bennett K.L."/>
            <person name="Superti-Furga G."/>
            <person name="Colinge J."/>
        </authorList>
    </citation>
    <scope>IDENTIFICATION BY MASS SPECTROMETRY [LARGE SCALE ANALYSIS]</scope>
</reference>
<reference key="8">
    <citation type="journal article" date="2011" name="Sci. Signal.">
        <title>System-wide temporal characterization of the proteome and phosphoproteome of human embryonic stem cell differentiation.</title>
        <authorList>
            <person name="Rigbolt K.T."/>
            <person name="Prokhorova T.A."/>
            <person name="Akimov V."/>
            <person name="Henningsen J."/>
            <person name="Johansen P.T."/>
            <person name="Kratchmarova I."/>
            <person name="Kassem M."/>
            <person name="Mann M."/>
            <person name="Olsen J.V."/>
            <person name="Blagoev B."/>
        </authorList>
    </citation>
    <scope>ACETYLATION [LARGE SCALE ANALYSIS] AT SER-2 (ISOFORM 2)</scope>
    <scope>PHOSPHORYLATION [LARGE SCALE ANALYSIS] AT SER-13</scope>
    <scope>PHOSPHORYLATION [LARGE SCALE ANALYSIS] AT SER-2 (ISOFORM 2)</scope>
    <scope>CLEAVAGE OF INITIATOR METHIONINE [LARGE SCALE ANALYSIS] (ISOFORM 2)</scope>
    <scope>IDENTIFICATION BY MASS SPECTROMETRY [LARGE SCALE ANALYSIS]</scope>
</reference>
<reference key="9">
    <citation type="journal article" date="2012" name="Mol. Cell. Proteomics">
        <title>Comparative large-scale characterisation of plant vs. mammal proteins reveals similar and idiosyncratic N-alpha acetylation features.</title>
        <authorList>
            <person name="Bienvenut W.V."/>
            <person name="Sumpton D."/>
            <person name="Martinez A."/>
            <person name="Lilla S."/>
            <person name="Espagne C."/>
            <person name="Meinnel T."/>
            <person name="Giglione C."/>
        </authorList>
    </citation>
    <scope>ACETYLATION [LARGE SCALE ANALYSIS] AT SER-2 (ISOFORM 2)</scope>
    <scope>CLEAVAGE OF INITIATOR METHIONINE [LARGE SCALE ANALYSIS] (ISOFORM 2)</scope>
    <scope>IDENTIFICATION BY MASS SPECTROMETRY [LARGE SCALE ANALYSIS]</scope>
</reference>
<reference key="10">
    <citation type="journal article" date="2012" name="Proc. Natl. Acad. Sci. U.S.A.">
        <title>N-terminal acetylome analyses and functional insights of the N-terminal acetyltransferase NatB.</title>
        <authorList>
            <person name="Van Damme P."/>
            <person name="Lasa M."/>
            <person name="Polevoda B."/>
            <person name="Gazquez C."/>
            <person name="Elosegui-Artola A."/>
            <person name="Kim D.S."/>
            <person name="De Juan-Pardo E."/>
            <person name="Demeyer K."/>
            <person name="Hole K."/>
            <person name="Larrea E."/>
            <person name="Timmerman E."/>
            <person name="Prieto J."/>
            <person name="Arnesen T."/>
            <person name="Sherman F."/>
            <person name="Gevaert K."/>
            <person name="Aldabe R."/>
        </authorList>
    </citation>
    <scope>ACETYLATION [LARGE SCALE ANALYSIS] AT SER-2 (ISOFORM 2)</scope>
    <scope>CLEAVAGE OF INITIATOR METHIONINE [LARGE SCALE ANALYSIS] (ISOFORM 2)</scope>
    <scope>IDENTIFICATION BY MASS SPECTROMETRY [LARGE SCALE ANALYSIS]</scope>
</reference>
<reference key="11">
    <citation type="journal article" date="2013" name="J. Proteome Res.">
        <title>Toward a comprehensive characterization of a human cancer cell phosphoproteome.</title>
        <authorList>
            <person name="Zhou H."/>
            <person name="Di Palma S."/>
            <person name="Preisinger C."/>
            <person name="Peng M."/>
            <person name="Polat A.N."/>
            <person name="Heck A.J."/>
            <person name="Mohammed S."/>
        </authorList>
    </citation>
    <scope>PHOSPHORYLATION [LARGE SCALE ANALYSIS] AT SER-13</scope>
    <scope>IDENTIFICATION BY MASS SPECTROMETRY [LARGE SCALE ANALYSIS]</scope>
    <source>
        <tissue>Erythroleukemia</tissue>
    </source>
</reference>
<reference key="12">
    <citation type="journal article" date="2014" name="J. Proteomics">
        <title>An enzyme assisted RP-RPLC approach for in-depth analysis of human liver phosphoproteome.</title>
        <authorList>
            <person name="Bian Y."/>
            <person name="Song C."/>
            <person name="Cheng K."/>
            <person name="Dong M."/>
            <person name="Wang F."/>
            <person name="Huang J."/>
            <person name="Sun D."/>
            <person name="Wang L."/>
            <person name="Ye M."/>
            <person name="Zou H."/>
        </authorList>
    </citation>
    <scope>PHOSPHORYLATION [LARGE SCALE ANALYSIS] AT SER-13; THR-426; SER-434; SER-448 AND SER-461</scope>
    <scope>IDENTIFICATION BY MASS SPECTROMETRY [LARGE SCALE ANALYSIS]</scope>
    <source>
        <tissue>Liver</tissue>
    </source>
</reference>
<reference key="13">
    <citation type="journal article" date="2020" name="Acta Neuropathol.">
        <title>Loss of UGP2 in brain leads to a severe epileptic encephalopathy, emphasizing that bi-allelic isoform-specific start-loss mutations of essential genes can cause genetic diseases.</title>
        <authorList>
            <person name="Perenthaler E."/>
            <person name="Nikoncuk A."/>
            <person name="Yousefi S."/>
            <person name="Berdowski W.M."/>
            <person name="Alsagob M."/>
            <person name="Capo I."/>
            <person name="van der Linde H.C."/>
            <person name="van den Berg P."/>
            <person name="Jacobs E.H."/>
            <person name="Putar D."/>
            <person name="Ghazvini M."/>
            <person name="Aronica E."/>
            <person name="van Ijcken W.F.J."/>
            <person name="de Valk W.G."/>
            <person name="Medici-van den Herik E."/>
            <person name="van Slegtenhorst M."/>
            <person name="Brick L."/>
            <person name="Kozenko M."/>
            <person name="Kohler J.N."/>
            <person name="Bernstein J.A."/>
            <person name="Monaghan K.G."/>
            <person name="Begtrup A."/>
            <person name="Torene R."/>
            <person name="Al Futaisi A."/>
            <person name="Al Murshedi F."/>
            <person name="Mani R."/>
            <person name="Al Azri F."/>
            <person name="Kamsteeg E.J."/>
            <person name="Mojarrad M."/>
            <person name="Eslahi A."/>
            <person name="Khazaei Z."/>
            <person name="Darmiyan F.M."/>
            <person name="Doosti M."/>
            <person name="Karimiani E.G."/>
            <person name="Vandrovcova J."/>
            <person name="Zafar F."/>
            <person name="Rana N."/>
            <person name="Kandaswamy K.K."/>
            <person name="Hertecant J."/>
            <person name="Bauer P."/>
            <person name="Almuhaizea M.A."/>
            <person name="Salih M.A."/>
            <person name="Aldosary M."/>
            <person name="Almass R."/>
            <person name="Al-Quait L."/>
            <person name="Qubbaj W."/>
            <person name="Coskun S."/>
            <person name="Alahmadi K.O."/>
            <person name="Hamad M.H.A."/>
            <person name="Alwadaee S."/>
            <person name="Awartani K."/>
            <person name="Dababo A.M."/>
            <person name="Almohanna F."/>
            <person name="Colak D."/>
            <person name="Dehghani M."/>
            <person name="Mehrjardi M.Y.V."/>
            <person name="Gunel M."/>
            <person name="Ercan-Sencicek A.G."/>
            <person name="Passi G.R."/>
            <person name="Cheema H.A."/>
            <person name="Efthymiou S."/>
            <person name="Houlden H."/>
            <person name="Bertoli-Avella A.M."/>
            <person name="Brooks A.S."/>
            <person name="Retterer K."/>
            <person name="Maroofian R."/>
            <person name="Kaya N."/>
            <person name="van Ham T.J."/>
            <person name="Barakat T.S."/>
        </authorList>
    </citation>
    <scope>INVOLVEMENT IN DEE83</scope>
    <scope>VARIANT DEE83 VAL-12</scope>
    <scope>CHARACTERIZATION OF VARIANT DEE83 VAL-12</scope>
    <scope>FUNCTION</scope>
    <scope>CATALYTIC ACTIVITY</scope>
    <scope>PATHWAY</scope>
    <scope>SUBCELLULAR LOCATION</scope>
    <scope>TISSUE SPECIFICITY</scope>
    <scope>DEVELOPMENTAL STAGE (ISOFORM 2)</scope>
</reference>
<reference key="14">
    <citation type="journal article" date="2012" name="Biochem. J.">
        <title>The crystal structure of human UDP-glucose pyrophosphorylase reveals a latch effect that influences enzymatic activity.</title>
        <authorList>
            <person name="Yu Q."/>
            <person name="Zheng X."/>
        </authorList>
    </citation>
    <scope>X-RAY CRYSTALLOGRAPHY (3.57 ANGSTROMS)</scope>
    <scope>SUBUNIT</scope>
    <scope>MUTAGENESIS OF 502-ASP--LEU-503</scope>
</reference>
<reference key="15">
    <citation type="journal article" date="2015" name="Sci. Rep.">
        <title>A quaternary mechanism enables the complex biological functions of octameric human UDP-glucose pyrophosphorylase, a key enzyme in cell metabolism.</title>
        <authorList>
            <person name="Fuhring J.I."/>
            <person name="Cramer J.T."/>
            <person name="Schneider J."/>
            <person name="Baruch P."/>
            <person name="Gerardy-Schahn R."/>
            <person name="Fedorov R."/>
        </authorList>
    </citation>
    <scope>X-RAY CRYSTALLOGRAPHY (3.35 ANGSTROMS) OF 2-508 IN COMPLEX WITH UDP-GLUCOSE</scope>
</reference>
<comment type="function">
    <text evidence="5 6 8">UTP--glucose-1-phosphate uridylyltransferase catalyzing the conversion of glucose-1-phosphate into UDP-glucose, a crucial precursor for the production of glycogen.</text>
</comment>
<comment type="catalytic activity">
    <reaction evidence="5 6 8">
        <text>alpha-D-glucose 1-phosphate + UTP + H(+) = UDP-alpha-D-glucose + diphosphate</text>
        <dbReference type="Rhea" id="RHEA:19889"/>
        <dbReference type="ChEBI" id="CHEBI:15378"/>
        <dbReference type="ChEBI" id="CHEBI:33019"/>
        <dbReference type="ChEBI" id="CHEBI:46398"/>
        <dbReference type="ChEBI" id="CHEBI:58601"/>
        <dbReference type="ChEBI" id="CHEBI:58885"/>
        <dbReference type="EC" id="2.7.7.9"/>
    </reaction>
    <physiologicalReaction direction="left-to-right" evidence="5">
        <dbReference type="Rhea" id="RHEA:19890"/>
    </physiologicalReaction>
</comment>
<comment type="biophysicochemical properties">
    <molecule>Isoform 2</molecule>
    <kinetics>
        <KM evidence="5">917 uM for MgUTP</KM>
        <KM evidence="5">404 uM for Glc1P</KM>
        <KM evidence="5">63 uM for UDP-Glc</KM>
        <KM evidence="5">384 uM for MgPPi</KM>
    </kinetics>
</comment>
<comment type="biophysicochemical properties">
    <molecule>Isoform 1</molecule>
    <kinetics>
        <KM evidence="5">301 uM for MgUTP</KM>
        <KM evidence="5">207 uM for Glc1P</KM>
        <KM evidence="5">41 uM for UDP-Glc</KM>
    </kinetics>
</comment>
<comment type="pathway">
    <text evidence="13">Glycan biosynthesis; glycogen biosynthesis.</text>
</comment>
<comment type="subunit">
    <text evidence="3">Homooctamer.</text>
</comment>
<comment type="interaction">
    <interactant intactId="EBI-743729">
        <id>Q16851</id>
    </interactant>
    <interactant intactId="EBI-711158">
        <id>O95376</id>
        <label>ARIH2</label>
    </interactant>
    <organismsDiffer>false</organismsDiffer>
    <experiments>7</experiments>
</comment>
<comment type="interaction">
    <interactant intactId="EBI-743729">
        <id>Q16851</id>
    </interactant>
    <interactant intactId="EBI-374781">
        <id>O76003</id>
        <label>GLRX3</label>
    </interactant>
    <organismsDiffer>false</organismsDiffer>
    <experiments>3</experiments>
</comment>
<comment type="interaction">
    <interactant intactId="EBI-743729">
        <id>Q16851</id>
    </interactant>
    <interactant intactId="EBI-401755">
        <id>P62993</id>
        <label>GRB2</label>
    </interactant>
    <organismsDiffer>false</organismsDiffer>
    <experiments>2</experiments>
</comment>
<comment type="interaction">
    <interactant intactId="EBI-743729">
        <id>Q16851</id>
    </interactant>
    <interactant intactId="EBI-948266">
        <id>O14901</id>
        <label>KLF11</label>
    </interactant>
    <organismsDiffer>false</organismsDiffer>
    <experiments>3</experiments>
</comment>
<comment type="interaction">
    <interactant intactId="EBI-743729">
        <id>Q16851</id>
    </interactant>
    <interactant intactId="EBI-742388">
        <id>Q9H8W4</id>
        <label>PLEKHF2</label>
    </interactant>
    <organismsDiffer>false</organismsDiffer>
    <experiments>3</experiments>
</comment>
<comment type="interaction">
    <interactant intactId="EBI-743729">
        <id>Q16851</id>
    </interactant>
    <interactant intactId="EBI-743729">
        <id>Q16851</id>
        <label>UGP2</label>
    </interactant>
    <organismsDiffer>false</organismsDiffer>
    <experiments>6</experiments>
</comment>
<comment type="subcellular location">
    <subcellularLocation>
        <location evidence="5 6">Cytoplasm</location>
    </subcellularLocation>
</comment>
<comment type="alternative products">
    <event type="alternative splicing"/>
    <isoform>
        <id>Q16851-1</id>
        <name>1</name>
        <name evidence="11">Muscle-II</name>
        <name evidence="10">long</name>
        <sequence type="displayed"/>
    </isoform>
    <isoform>
        <id>Q16851-2</id>
        <name>2</name>
        <name evidence="11">Muscle-I</name>
        <name evidence="10">short</name>
        <sequence type="described" ref="VSP_012834"/>
    </isoform>
</comment>
<comment type="tissue specificity">
    <text evidence="5 6 8">Highly expressed in various brain regions. Expressed in amygdala, anterior cingulate cortex, caudate, cerebellar hemisphere, cerebellum, cortex, frontal cortex, hippocampus, hypothalamus, nucleus accumbens, putamen, spinal cord and substantia nigra (PubMed:31820119). Also widely expressed among other tissues, including liver, heart, placenta, lung, kidney, pancreas and skeletal muscle (PubMed:8354390, PubMed:8631325).</text>
</comment>
<comment type="developmental stage">
    <molecule>Isoform 2</molecule>
    <text evidence="5">Predominantly expressed in developing brain (PubMed:31820119). Preferentially expressed in the developing cortex and cerebellum from gestational weeks 14, 20 and 28 and in the frontal cortex of brains from weeks 21 and 23 (at protein level) (PubMed:31820119).</text>
</comment>
<comment type="disease" evidence="5">
    <disease id="DI-05738">
        <name>Developmental and epileptic encephalopathy 83</name>
        <acronym>DEE83</acronym>
        <description>A form of epileptic encephalopathy, a heterogeneous group of severe early-onset epilepsies characterized by refractory seizures, neurodevelopmental impairment, and poor prognosis. Development is normal prior to seizure onset, after which cognitive and motor delays become apparent. DEE83 is an autosomal recessive form characterized by onset of frequent, intractable seizures in the first days to months of life. Affected individuals have profound developmental delay with no motor or language skill acquisition, and poor or absent visual tracking. Many patients die in the first years of life.</description>
        <dbReference type="MIM" id="618744"/>
    </disease>
    <text evidence="5">The disease is caused by variants affecting the gene represented in this entry. A recurrent, pathogenic variant affecting the translation initiation codon of isoform 2 has been found in multiple DEE83 families. The variant results in the absence of isoform 2 and leads to reduced levels of functional UGP2 enzyme in neural stem cells. The absence of isoform 2 is compensated by an increased abundance of a functional isoform 1, carrying variant p.Met12Val, which may explain the survival of the patients. A complete absence of functional UGP2 in all cells would be embryonic lethal.</text>
</comment>
<comment type="similarity">
    <text evidence="12">Belongs to the UDPGP type 1 family.</text>
</comment>
<comment type="caution">
    <text evidence="6 8 14 15">The human genome was initially thought to contain 2 genes for UTP--glucose-1-phosphate uridylyltransferase: UGP1 and UGP2 (PubMed:8354390, PubMed:8631325). However, the sequence defined as UGP1 (PubMed:8354390) probably does not exist and corresponds to UGP2.</text>
</comment>
<sequence>MSRFVQDLSKAMSQDGASQFQEVIRQELELSVKKELEKILTTASSHEFEHTKKDLDGFRKLFHRFLQEKGPSVDWGKIQRPPEDSIQPYEKIKARGLPDNISSVLNKLVVVKLNGGLGTSMGCKGPKSLIGVRNENTFLDLTVQQIEHLNKTYNTDVPLVLMNSFNTDEDTKKILQKYNHCRVKIYTFNQSRYPRINKESLLPVAKDVSYSGENTEAWYPPGHGDIYASFYNSGLLDTFIGEGKEYIFVSNIDNLGATVDLYILNHLMNPPNGKRCEFVMEVTNKTRADVKGGTLTQYEGKLRLVEIAQVPKAHVDEFKSVSKFKIFNTNNLWISLAAVKRLQEQNAIDMEIIVNAKTLDGGLNVIQLETAVGAAIKSFENSLGINVPRSRFLPVKTTSDLLLVMSNLYSLNAGSLTMSEKREFPTVPLVKLGSSFTKVQDYLRRFESIPDMLELDHLTVSGDVTFGKNVSLKGTVIIIANHGDRIDIPPGAVLENKIVSGNLRILDH</sequence>
<accession>Q16851</accession>
<accession>Q07131</accession>
<accession>Q0P6K2</accession>
<accession>Q86Y81</accession>
<accession>Q9BU15</accession>
<keyword id="KW-0002">3D-structure</keyword>
<keyword id="KW-0007">Acetylation</keyword>
<keyword id="KW-0025">Alternative splicing</keyword>
<keyword id="KW-0963">Cytoplasm</keyword>
<keyword id="KW-0225">Disease variant</keyword>
<keyword id="KW-0887">Epilepsy</keyword>
<keyword id="KW-0460">Magnesium</keyword>
<keyword id="KW-0479">Metal-binding</keyword>
<keyword id="KW-0548">Nucleotidyltransferase</keyword>
<keyword id="KW-0597">Phosphoprotein</keyword>
<keyword id="KW-1267">Proteomics identification</keyword>
<keyword id="KW-1185">Reference proteome</keyword>
<keyword id="KW-0808">Transferase</keyword>
<proteinExistence type="evidence at protein level"/>
<name>UGPA_HUMAN</name>
<feature type="chain" id="PRO_0000185752" description="UTP--glucose-1-phosphate uridylyltransferase">
    <location>
        <begin position="1"/>
        <end position="508"/>
    </location>
</feature>
<feature type="region of interest" description="Oligomerization">
    <location>
        <begin position="457"/>
        <end position="508"/>
    </location>
</feature>
<feature type="region of interest" description="Critical for end-to-end subunit interaction">
    <location>
        <begin position="502"/>
        <end position="503"/>
    </location>
</feature>
<feature type="active site" evidence="1">
    <location>
        <position position="396"/>
    </location>
</feature>
<feature type="binding site" evidence="2">
    <location>
        <begin position="113"/>
        <end position="116"/>
    </location>
    <ligand>
        <name>UTP</name>
        <dbReference type="ChEBI" id="CHEBI:46398"/>
    </ligand>
</feature>
<feature type="binding site" evidence="4 17">
    <location>
        <begin position="115"/>
        <end position="116"/>
    </location>
    <ligand>
        <name>substrate</name>
    </ligand>
</feature>
<feature type="binding site" evidence="1">
    <location>
        <position position="127"/>
    </location>
    <ligand>
        <name>Mg(2+)</name>
        <dbReference type="ChEBI" id="CHEBI:18420"/>
    </ligand>
</feature>
<feature type="binding site" evidence="2">
    <location>
        <position position="127"/>
    </location>
    <ligand>
        <name>UTP</name>
        <dbReference type="ChEBI" id="CHEBI:46398"/>
    </ligand>
</feature>
<feature type="binding site" evidence="2">
    <location>
        <position position="190"/>
    </location>
    <ligand>
        <name>UTP</name>
        <dbReference type="ChEBI" id="CHEBI:46398"/>
    </ligand>
</feature>
<feature type="binding site" evidence="2">
    <location>
        <position position="222"/>
    </location>
    <ligand>
        <name>UTP</name>
        <dbReference type="ChEBI" id="CHEBI:46398"/>
    </ligand>
</feature>
<feature type="binding site" evidence="4 17">
    <location>
        <position position="223"/>
    </location>
    <ligand>
        <name>substrate</name>
    </ligand>
</feature>
<feature type="binding site" evidence="4 17">
    <location>
        <begin position="251"/>
        <end position="253"/>
    </location>
    <ligand>
        <name>substrate</name>
    </ligand>
</feature>
<feature type="binding site" evidence="1">
    <location>
        <position position="253"/>
    </location>
    <ligand>
        <name>Mg(2+)</name>
        <dbReference type="ChEBI" id="CHEBI:18420"/>
    </ligand>
</feature>
<feature type="binding site" evidence="2">
    <location>
        <position position="253"/>
    </location>
    <ligand>
        <name>UTP</name>
        <dbReference type="ChEBI" id="CHEBI:46398"/>
    </ligand>
</feature>
<feature type="binding site" evidence="4 17">
    <location>
        <position position="330"/>
    </location>
    <ligand>
        <name>substrate</name>
    </ligand>
</feature>
<feature type="binding site" evidence="2">
    <location>
        <position position="396"/>
    </location>
    <ligand>
        <name>UTP</name>
        <dbReference type="ChEBI" id="CHEBI:46398"/>
    </ligand>
</feature>
<feature type="modified residue" description="Phosphoserine" evidence="20 23 24">
    <location>
        <position position="13"/>
    </location>
</feature>
<feature type="modified residue" description="Phosphothreonine" evidence="24">
    <location>
        <position position="426"/>
    </location>
</feature>
<feature type="modified residue" description="Phosphoserine" evidence="24">
    <location>
        <position position="434"/>
    </location>
</feature>
<feature type="modified residue" description="N6-acetyllysine" evidence="18">
    <location>
        <position position="438"/>
    </location>
</feature>
<feature type="modified residue" description="Phosphoserine" evidence="24">
    <location>
        <position position="448"/>
    </location>
</feature>
<feature type="modified residue" description="Phosphoserine" evidence="24">
    <location>
        <position position="461"/>
    </location>
</feature>
<feature type="splice variant" id="VSP_012834" description="In isoform 2." evidence="9 11">
    <location>
        <begin position="1"/>
        <end position="11"/>
    </location>
</feature>
<feature type="sequence variant" id="VAR_083746" description="In DEE83; the nucleotide substitution also alters the translation of other alternatively spliced products of the gene globally reducing functional enzyme levels and causing reduced synthesis of UDP-glucose and decreased glycogen biosynthetic process; no effect on protein localization; no effect on UTP:glucose-1-phosphate uridylyltransferase activity; dbSNP:rs768305634." evidence="5">
    <original>M</original>
    <variation>V</variation>
    <location>
        <position position="12"/>
    </location>
</feature>
<feature type="sequence variant" id="VAR_033042" description="In dbSNP:rs1130982." evidence="6 8">
    <original>M</original>
    <variation>I</variation>
    <location>
        <position position="268"/>
    </location>
</feature>
<feature type="mutagenesis site" description="No significant loss of activity." evidence="7">
    <original>C</original>
    <variation>S</variation>
    <location>
        <position position="123"/>
    </location>
</feature>
<feature type="mutagenesis site" description="No significant loss of activity." evidence="7">
    <original>W</original>
    <variation>S</variation>
    <location>
        <position position="218"/>
    </location>
</feature>
<feature type="mutagenesis site" description="No significant loss of activity." evidence="7">
    <original>H</original>
    <variation>R</variation>
    <location>
        <position position="266"/>
    </location>
</feature>
<feature type="mutagenesis site" description="Loss of activity; possibly due to folding defect." evidence="7">
    <original>W</original>
    <variation>S</variation>
    <location>
        <position position="333"/>
    </location>
</feature>
<feature type="mutagenesis site" description="No significant loss of activity." evidence="7">
    <original>R</original>
    <variation>H</variation>
    <location>
        <position position="389"/>
    </location>
</feature>
<feature type="mutagenesis site" description="Loss of activity; possibly due to folding defect." evidence="7">
    <original>R</original>
    <variation>H</variation>
    <location>
        <position position="391"/>
    </location>
</feature>
<feature type="mutagenesis site" description="No significant loss of activity." evidence="7">
    <original>R</original>
    <variation>H</variation>
    <location>
        <position position="422"/>
    </location>
</feature>
<feature type="mutagenesis site" description="No significant loss of activity." evidence="7">
    <original>R</original>
    <variation>H</variation>
    <location>
        <position position="445"/>
    </location>
</feature>
<feature type="mutagenesis site" description="Abolishes oligomerization and significantly increases enzymatic activity." evidence="3">
    <original>NL</original>
    <variation>PE</variation>
    <location>
        <begin position="502"/>
        <end position="503"/>
    </location>
</feature>
<feature type="sequence conflict" description="In Ref. 1." evidence="12" ref="1">
    <original>R</original>
    <variation>L</variation>
    <location>
        <position position="25"/>
    </location>
</feature>
<feature type="sequence conflict" description="In Ref. 1." evidence="12" ref="1">
    <original>S</original>
    <variation>T</variation>
    <location>
        <position position="44"/>
    </location>
</feature>
<feature type="sequence conflict" description="In Ref. 1." evidence="12" ref="1">
    <original>F</original>
    <variation>Y</variation>
    <location>
        <position position="48"/>
    </location>
</feature>
<feature type="sequence conflict" description="In Ref. 1." evidence="12" ref="1">
    <original>F</original>
    <variation>Y</variation>
    <location>
        <position position="62"/>
    </location>
</feature>
<feature type="sequence conflict" description="In Ref. 1." evidence="12" ref="1">
    <original>T</original>
    <variation>S</variation>
    <location>
        <position position="152"/>
    </location>
</feature>
<feature type="sequence conflict" description="In Ref. 1 and 2; AAB05640." evidence="12" ref="1 2">
    <original>L</original>
    <variation>R</variation>
    <location>
        <position position="202"/>
    </location>
</feature>
<feature type="sequence conflict" description="In Ref. 1." evidence="12" ref="1">
    <original>Y</original>
    <variation>S</variation>
    <location>
        <position position="210"/>
    </location>
</feature>
<feature type="sequence conflict" description="In Ref. 1." evidence="12" ref="1">
    <original>N</original>
    <variation>S</variation>
    <location>
        <position position="214"/>
    </location>
</feature>
<feature type="sequence conflict" description="In Ref. 1." evidence="12" ref="1">
    <original>IG</original>
    <variation>LE</variation>
    <location>
        <begin position="240"/>
        <end position="241"/>
    </location>
</feature>
<feature type="sequence conflict" description="In Ref. 1." evidence="12" ref="1">
    <original>A</original>
    <variation>P</variation>
    <location>
        <position position="356"/>
    </location>
</feature>
<feature type="helix" evidence="25">
    <location>
        <begin position="25"/>
        <end position="41"/>
    </location>
</feature>
<feature type="helix" evidence="25">
    <location>
        <begin position="45"/>
        <end position="47"/>
    </location>
</feature>
<feature type="helix" evidence="25">
    <location>
        <begin position="49"/>
        <end position="65"/>
    </location>
</feature>
<feature type="helix" evidence="25">
    <location>
        <begin position="75"/>
        <end position="77"/>
    </location>
</feature>
<feature type="strand" evidence="25">
    <location>
        <begin position="85"/>
        <end position="88"/>
    </location>
</feature>
<feature type="helix" evidence="25">
    <location>
        <begin position="89"/>
        <end position="95"/>
    </location>
</feature>
<feature type="helix" evidence="25">
    <location>
        <begin position="101"/>
        <end position="105"/>
    </location>
</feature>
<feature type="strand" evidence="25">
    <location>
        <begin position="108"/>
        <end position="114"/>
    </location>
</feature>
<feature type="turn" evidence="25">
    <location>
        <begin position="118"/>
        <end position="122"/>
    </location>
</feature>
<feature type="strand" evidence="25">
    <location>
        <begin position="124"/>
        <end position="126"/>
    </location>
</feature>
<feature type="helix" evidence="25">
    <location>
        <begin position="127"/>
        <end position="129"/>
    </location>
</feature>
<feature type="strand" evidence="25">
    <location>
        <begin position="130"/>
        <end position="133"/>
    </location>
</feature>
<feature type="helix" evidence="25">
    <location>
        <begin position="138"/>
        <end position="153"/>
    </location>
</feature>
<feature type="strand" evidence="25">
    <location>
        <begin position="158"/>
        <end position="163"/>
    </location>
</feature>
<feature type="turn" evidence="25">
    <location>
        <begin position="165"/>
        <end position="167"/>
    </location>
</feature>
<feature type="helix" evidence="25">
    <location>
        <begin position="168"/>
        <end position="172"/>
    </location>
</feature>
<feature type="helix" evidence="25">
    <location>
        <begin position="173"/>
        <end position="178"/>
    </location>
</feature>
<feature type="strand" evidence="25">
    <location>
        <begin position="179"/>
        <end position="182"/>
    </location>
</feature>
<feature type="strand" evidence="25">
    <location>
        <begin position="184"/>
        <end position="189"/>
    </location>
</feature>
<feature type="strand" evidence="25">
    <location>
        <begin position="196"/>
        <end position="200"/>
    </location>
</feature>
<feature type="helix" evidence="25">
    <location>
        <begin position="210"/>
        <end position="212"/>
    </location>
</feature>
<feature type="helix" evidence="25">
    <location>
        <begin position="215"/>
        <end position="217"/>
    </location>
</feature>
<feature type="helix" evidence="25">
    <location>
        <begin position="226"/>
        <end position="232"/>
    </location>
</feature>
<feature type="helix" evidence="25">
    <location>
        <begin position="235"/>
        <end position="241"/>
    </location>
</feature>
<feature type="strand" evidence="25">
    <location>
        <begin position="246"/>
        <end position="254"/>
    </location>
</feature>
<feature type="helix" evidence="25">
    <location>
        <begin position="261"/>
        <end position="268"/>
    </location>
</feature>
<feature type="helix" evidence="25">
    <location>
        <begin position="271"/>
        <end position="273"/>
    </location>
</feature>
<feature type="strand" evidence="25">
    <location>
        <begin position="277"/>
        <end position="284"/>
    </location>
</feature>
<feature type="strand" evidence="25">
    <location>
        <begin position="294"/>
        <end position="298"/>
    </location>
</feature>
<feature type="strand" evidence="25">
    <location>
        <begin position="301"/>
        <end position="305"/>
    </location>
</feature>
<feature type="helix" evidence="25">
    <location>
        <begin position="307"/>
        <end position="309"/>
    </location>
</feature>
<feature type="helix" evidence="25">
    <location>
        <begin position="315"/>
        <end position="319"/>
    </location>
</feature>
<feature type="turn" evidence="25">
    <location>
        <begin position="321"/>
        <end position="323"/>
    </location>
</feature>
<feature type="strand" evidence="25">
    <location>
        <begin position="326"/>
        <end position="335"/>
    </location>
</feature>
<feature type="helix" evidence="25">
    <location>
        <begin position="336"/>
        <end position="344"/>
    </location>
</feature>
<feature type="strand" evidence="25">
    <location>
        <begin position="353"/>
        <end position="359"/>
    </location>
</feature>
<feature type="turn" evidence="25">
    <location>
        <begin position="360"/>
        <end position="362"/>
    </location>
</feature>
<feature type="strand" evidence="25">
    <location>
        <begin position="363"/>
        <end position="369"/>
    </location>
</feature>
<feature type="helix" evidence="25">
    <location>
        <begin position="372"/>
        <end position="378"/>
    </location>
</feature>
<feature type="strand" evidence="25">
    <location>
        <begin position="383"/>
        <end position="386"/>
    </location>
</feature>
<feature type="helix" evidence="25">
    <location>
        <begin position="389"/>
        <end position="391"/>
    </location>
</feature>
<feature type="helix" evidence="25">
    <location>
        <begin position="398"/>
        <end position="405"/>
    </location>
</feature>
<feature type="strand" evidence="25">
    <location>
        <begin position="409"/>
        <end position="412"/>
    </location>
</feature>
<feature type="strand" evidence="25">
    <location>
        <begin position="415"/>
        <end position="418"/>
    </location>
</feature>
<feature type="strand" evidence="25">
    <location>
        <begin position="423"/>
        <end position="426"/>
    </location>
</feature>
<feature type="strand" evidence="25">
    <location>
        <begin position="429"/>
        <end position="432"/>
    </location>
</feature>
<feature type="helix" evidence="25">
    <location>
        <begin position="434"/>
        <end position="436"/>
    </location>
</feature>
<feature type="helix" evidence="25">
    <location>
        <begin position="439"/>
        <end position="445"/>
    </location>
</feature>
<feature type="strand" evidence="25">
    <location>
        <begin position="446"/>
        <end position="448"/>
    </location>
</feature>
<feature type="strand" evidence="25">
    <location>
        <begin position="455"/>
        <end position="460"/>
    </location>
</feature>
<feature type="strand" evidence="25">
    <location>
        <begin position="462"/>
        <end position="466"/>
    </location>
</feature>
<feature type="strand" evidence="25">
    <location>
        <begin position="471"/>
        <end position="480"/>
    </location>
</feature>
<feature type="strand" evidence="25">
    <location>
        <begin position="485"/>
        <end position="488"/>
    </location>
</feature>
<feature type="strand" evidence="25">
    <location>
        <begin position="493"/>
        <end position="496"/>
    </location>
</feature>
<feature type="strand" evidence="25">
    <location>
        <begin position="498"/>
        <end position="501"/>
    </location>
</feature>
<feature type="initiator methionine" description="Removed" evidence="19 20 21 22">
    <location sequence="Q16851-2">
        <position position="1"/>
    </location>
</feature>
<feature type="modified residue" description="N-acetylserine" evidence="19 20 21 22">
    <location sequence="Q16851-2">
        <position position="2"/>
    </location>
</feature>
<feature type="modified residue" description="Phosphoserine" evidence="19 20">
    <location sequence="Q16851-2">
        <position position="2"/>
    </location>
</feature>
<evidence type="ECO:0000250" key="1"/>
<evidence type="ECO:0000250" key="2">
    <source>
        <dbReference type="UniProtKB" id="Q9M9P3"/>
    </source>
</evidence>
<evidence type="ECO:0000269" key="3">
    <source>
    </source>
</evidence>
<evidence type="ECO:0000269" key="4">
    <source>
    </source>
</evidence>
<evidence type="ECO:0000269" key="5">
    <source>
    </source>
</evidence>
<evidence type="ECO:0000269" key="6">
    <source>
    </source>
</evidence>
<evidence type="ECO:0000269" key="7">
    <source>
    </source>
</evidence>
<evidence type="ECO:0000269" key="8">
    <source>
    </source>
</evidence>
<evidence type="ECO:0000303" key="9">
    <source>
    </source>
</evidence>
<evidence type="ECO:0000303" key="10">
    <source>
    </source>
</evidence>
<evidence type="ECO:0000303" key="11">
    <source>
    </source>
</evidence>
<evidence type="ECO:0000305" key="12"/>
<evidence type="ECO:0000305" key="13">
    <source>
    </source>
</evidence>
<evidence type="ECO:0000305" key="14">
    <source>
    </source>
</evidence>
<evidence type="ECO:0000305" key="15">
    <source>
    </source>
</evidence>
<evidence type="ECO:0000312" key="16">
    <source>
        <dbReference type="HGNC" id="HGNC:12527"/>
    </source>
</evidence>
<evidence type="ECO:0007744" key="17">
    <source>
        <dbReference type="PDB" id="4R7P"/>
    </source>
</evidence>
<evidence type="ECO:0007744" key="18">
    <source>
    </source>
</evidence>
<evidence type="ECO:0007744" key="19">
    <source>
    </source>
</evidence>
<evidence type="ECO:0007744" key="20">
    <source>
    </source>
</evidence>
<evidence type="ECO:0007744" key="21">
    <source>
    </source>
</evidence>
<evidence type="ECO:0007744" key="22">
    <source>
    </source>
</evidence>
<evidence type="ECO:0007744" key="23">
    <source>
    </source>
</evidence>
<evidence type="ECO:0007744" key="24">
    <source>
    </source>
</evidence>
<evidence type="ECO:0007829" key="25">
    <source>
        <dbReference type="PDB" id="4R7P"/>
    </source>
</evidence>
<organism>
    <name type="scientific">Homo sapiens</name>
    <name type="common">Human</name>
    <dbReference type="NCBI Taxonomy" id="9606"/>
    <lineage>
        <taxon>Eukaryota</taxon>
        <taxon>Metazoa</taxon>
        <taxon>Chordata</taxon>
        <taxon>Craniata</taxon>
        <taxon>Vertebrata</taxon>
        <taxon>Euteleostomi</taxon>
        <taxon>Mammalia</taxon>
        <taxon>Eutheria</taxon>
        <taxon>Euarchontoglires</taxon>
        <taxon>Primates</taxon>
        <taxon>Haplorrhini</taxon>
        <taxon>Catarrhini</taxon>
        <taxon>Hominidae</taxon>
        <taxon>Homo</taxon>
    </lineage>
</organism>
<gene>
    <name evidence="16" type="primary">UGP2</name>
    <name evidence="16" type="synonym">UGP1</name>
</gene>